<organism>
    <name type="scientific">Rhizobium etli (strain CIAT 652)</name>
    <dbReference type="NCBI Taxonomy" id="491916"/>
    <lineage>
        <taxon>Bacteria</taxon>
        <taxon>Pseudomonadati</taxon>
        <taxon>Pseudomonadota</taxon>
        <taxon>Alphaproteobacteria</taxon>
        <taxon>Hyphomicrobiales</taxon>
        <taxon>Rhizobiaceae</taxon>
        <taxon>Rhizobium/Agrobacterium group</taxon>
        <taxon>Rhizobium</taxon>
    </lineage>
</organism>
<proteinExistence type="inferred from homology"/>
<feature type="chain" id="PRO_1000121477" description="Large ribosomal subunit protein bL12">
    <location>
        <begin position="1"/>
        <end position="127"/>
    </location>
</feature>
<accession>B3PW58</accession>
<comment type="function">
    <text evidence="1">Forms part of the ribosomal stalk which helps the ribosome interact with GTP-bound translation factors. Is thus essential for accurate translation.</text>
</comment>
<comment type="subunit">
    <text evidence="1">Homodimer. Part of the ribosomal stalk of the 50S ribosomal subunit. Forms a multimeric L10(L12)X complex, where L10 forms an elongated spine to which 2 to 4 L12 dimers bind in a sequential fashion. Binds GTP-bound translation factors.</text>
</comment>
<comment type="similarity">
    <text evidence="1">Belongs to the bacterial ribosomal protein bL12 family.</text>
</comment>
<name>RL7_RHIE6</name>
<protein>
    <recommendedName>
        <fullName evidence="1">Large ribosomal subunit protein bL12</fullName>
    </recommendedName>
    <alternativeName>
        <fullName evidence="2">50S ribosomal protein L7/L12</fullName>
    </alternativeName>
</protein>
<keyword id="KW-0687">Ribonucleoprotein</keyword>
<keyword id="KW-0689">Ribosomal protein</keyword>
<evidence type="ECO:0000255" key="1">
    <source>
        <dbReference type="HAMAP-Rule" id="MF_00368"/>
    </source>
</evidence>
<evidence type="ECO:0000305" key="2"/>
<reference key="1">
    <citation type="journal article" date="2010" name="Appl. Environ. Microbiol.">
        <title>Conserved symbiotic plasmid DNA sequences in the multireplicon pangenomic structure of Rhizobium etli.</title>
        <authorList>
            <person name="Gonzalez V."/>
            <person name="Acosta J.L."/>
            <person name="Santamaria R.I."/>
            <person name="Bustos P."/>
            <person name="Fernandez J.L."/>
            <person name="Hernandez Gonzalez I.L."/>
            <person name="Diaz R."/>
            <person name="Flores M."/>
            <person name="Palacios R."/>
            <person name="Mora J."/>
            <person name="Davila G."/>
        </authorList>
    </citation>
    <scope>NUCLEOTIDE SEQUENCE [LARGE SCALE GENOMIC DNA]</scope>
    <source>
        <strain>CIAT 652</strain>
    </source>
</reference>
<sequence>MADLAKIVEDLSSLTVLEAAELSKLLEEKWGVSAAAPVAVAAVAGGAGGAAAPAEEEKTEFDVILTDAGANKINVIKEVRAITGLGLKEAKDLVEGAPKAVKEGVSKAEAADIKKKLEDAGAKADVK</sequence>
<dbReference type="EMBL" id="CP001074">
    <property type="protein sequence ID" value="ACE90710.1"/>
    <property type="molecule type" value="Genomic_DNA"/>
</dbReference>
<dbReference type="SMR" id="B3PW58"/>
<dbReference type="KEGG" id="rec:RHECIAT_CH0001740"/>
<dbReference type="eggNOG" id="COG0222">
    <property type="taxonomic scope" value="Bacteria"/>
</dbReference>
<dbReference type="HOGENOM" id="CLU_086499_3_0_5"/>
<dbReference type="Proteomes" id="UP000008817">
    <property type="component" value="Chromosome"/>
</dbReference>
<dbReference type="GO" id="GO:0022625">
    <property type="term" value="C:cytosolic large ribosomal subunit"/>
    <property type="evidence" value="ECO:0007669"/>
    <property type="project" value="TreeGrafter"/>
</dbReference>
<dbReference type="GO" id="GO:0003729">
    <property type="term" value="F:mRNA binding"/>
    <property type="evidence" value="ECO:0007669"/>
    <property type="project" value="TreeGrafter"/>
</dbReference>
<dbReference type="GO" id="GO:0003735">
    <property type="term" value="F:structural constituent of ribosome"/>
    <property type="evidence" value="ECO:0007669"/>
    <property type="project" value="InterPro"/>
</dbReference>
<dbReference type="GO" id="GO:0006412">
    <property type="term" value="P:translation"/>
    <property type="evidence" value="ECO:0007669"/>
    <property type="project" value="UniProtKB-UniRule"/>
</dbReference>
<dbReference type="CDD" id="cd00387">
    <property type="entry name" value="Ribosomal_L7_L12"/>
    <property type="match status" value="1"/>
</dbReference>
<dbReference type="FunFam" id="1.20.5.710:FF:000007">
    <property type="entry name" value="50S ribosomal protein L7/L12"/>
    <property type="match status" value="1"/>
</dbReference>
<dbReference type="FunFam" id="3.30.1390.10:FF:000001">
    <property type="entry name" value="50S ribosomal protein L7/L12"/>
    <property type="match status" value="1"/>
</dbReference>
<dbReference type="Gene3D" id="3.30.1390.10">
    <property type="match status" value="1"/>
</dbReference>
<dbReference type="Gene3D" id="1.20.5.710">
    <property type="entry name" value="Single helix bin"/>
    <property type="match status" value="1"/>
</dbReference>
<dbReference type="HAMAP" id="MF_00368">
    <property type="entry name" value="Ribosomal_bL12"/>
    <property type="match status" value="1"/>
</dbReference>
<dbReference type="InterPro" id="IPR000206">
    <property type="entry name" value="Ribosomal_bL12"/>
</dbReference>
<dbReference type="InterPro" id="IPR013823">
    <property type="entry name" value="Ribosomal_bL12_C"/>
</dbReference>
<dbReference type="InterPro" id="IPR014719">
    <property type="entry name" value="Ribosomal_bL12_C/ClpS-like"/>
</dbReference>
<dbReference type="InterPro" id="IPR008932">
    <property type="entry name" value="Ribosomal_bL12_oligo"/>
</dbReference>
<dbReference type="InterPro" id="IPR036235">
    <property type="entry name" value="Ribosomal_bL12_oligo_N_sf"/>
</dbReference>
<dbReference type="NCBIfam" id="TIGR00855">
    <property type="entry name" value="L12"/>
    <property type="match status" value="1"/>
</dbReference>
<dbReference type="PANTHER" id="PTHR45987">
    <property type="entry name" value="39S RIBOSOMAL PROTEIN L12"/>
    <property type="match status" value="1"/>
</dbReference>
<dbReference type="PANTHER" id="PTHR45987:SF4">
    <property type="entry name" value="LARGE RIBOSOMAL SUBUNIT PROTEIN BL12M"/>
    <property type="match status" value="1"/>
</dbReference>
<dbReference type="Pfam" id="PF00542">
    <property type="entry name" value="Ribosomal_L12"/>
    <property type="match status" value="1"/>
</dbReference>
<dbReference type="Pfam" id="PF16320">
    <property type="entry name" value="Ribosomal_L12_N"/>
    <property type="match status" value="1"/>
</dbReference>
<dbReference type="SUPFAM" id="SSF54736">
    <property type="entry name" value="ClpS-like"/>
    <property type="match status" value="1"/>
</dbReference>
<dbReference type="SUPFAM" id="SSF48300">
    <property type="entry name" value="Ribosomal protein L7/12, oligomerisation (N-terminal) domain"/>
    <property type="match status" value="1"/>
</dbReference>
<gene>
    <name evidence="1" type="primary">rplL</name>
    <name type="ordered locus">RHECIAT_CH0001740</name>
</gene>